<organism>
    <name type="scientific">Hahella chejuensis (strain KCTC 2396)</name>
    <dbReference type="NCBI Taxonomy" id="349521"/>
    <lineage>
        <taxon>Bacteria</taxon>
        <taxon>Pseudomonadati</taxon>
        <taxon>Pseudomonadota</taxon>
        <taxon>Gammaproteobacteria</taxon>
        <taxon>Oceanospirillales</taxon>
        <taxon>Hahellaceae</taxon>
        <taxon>Hahella</taxon>
    </lineage>
</organism>
<keyword id="KW-0067">ATP-binding</keyword>
<keyword id="KW-0460">Magnesium</keyword>
<keyword id="KW-0547">Nucleotide-binding</keyword>
<keyword id="KW-1185">Reference proteome</keyword>
<keyword id="KW-0808">Transferase</keyword>
<keyword id="KW-0819">tRNA processing</keyword>
<feature type="chain" id="PRO_0000377179" description="tRNA dimethylallyltransferase 1">
    <location>
        <begin position="1"/>
        <end position="303"/>
    </location>
</feature>
<feature type="region of interest" description="Interaction with substrate tRNA" evidence="1">
    <location>
        <begin position="42"/>
        <end position="45"/>
    </location>
</feature>
<feature type="binding site" evidence="1">
    <location>
        <begin position="17"/>
        <end position="24"/>
    </location>
    <ligand>
        <name>ATP</name>
        <dbReference type="ChEBI" id="CHEBI:30616"/>
    </ligand>
</feature>
<feature type="binding site" evidence="1">
    <location>
        <begin position="19"/>
        <end position="24"/>
    </location>
    <ligand>
        <name>substrate</name>
    </ligand>
</feature>
<feature type="site" description="Interaction with substrate tRNA" evidence="1">
    <location>
        <position position="107"/>
    </location>
</feature>
<proteinExistence type="inferred from homology"/>
<name>MIAA1_HAHCH</name>
<gene>
    <name evidence="1" type="primary">miaA1</name>
    <name type="ordered locus">HCH_02227</name>
</gene>
<dbReference type="EC" id="2.5.1.75" evidence="1"/>
<dbReference type="EMBL" id="CP000155">
    <property type="protein sequence ID" value="ABC29054.1"/>
    <property type="molecule type" value="Genomic_DNA"/>
</dbReference>
<dbReference type="RefSeq" id="WP_011396123.1">
    <property type="nucleotide sequence ID" value="NC_007645.1"/>
</dbReference>
<dbReference type="SMR" id="Q2SJX0"/>
<dbReference type="STRING" id="349521.HCH_02227"/>
<dbReference type="KEGG" id="hch:HCH_02227"/>
<dbReference type="eggNOG" id="COG0324">
    <property type="taxonomic scope" value="Bacteria"/>
</dbReference>
<dbReference type="HOGENOM" id="CLU_032616_0_1_6"/>
<dbReference type="OrthoDB" id="9776390at2"/>
<dbReference type="Proteomes" id="UP000000238">
    <property type="component" value="Chromosome"/>
</dbReference>
<dbReference type="GO" id="GO:0005524">
    <property type="term" value="F:ATP binding"/>
    <property type="evidence" value="ECO:0007669"/>
    <property type="project" value="UniProtKB-UniRule"/>
</dbReference>
<dbReference type="GO" id="GO:0052381">
    <property type="term" value="F:tRNA dimethylallyltransferase activity"/>
    <property type="evidence" value="ECO:0007669"/>
    <property type="project" value="UniProtKB-UniRule"/>
</dbReference>
<dbReference type="GO" id="GO:0006400">
    <property type="term" value="P:tRNA modification"/>
    <property type="evidence" value="ECO:0007669"/>
    <property type="project" value="TreeGrafter"/>
</dbReference>
<dbReference type="Gene3D" id="3.40.50.300">
    <property type="entry name" value="P-loop containing nucleotide triphosphate hydrolases"/>
    <property type="match status" value="1"/>
</dbReference>
<dbReference type="HAMAP" id="MF_00185">
    <property type="entry name" value="IPP_trans"/>
    <property type="match status" value="1"/>
</dbReference>
<dbReference type="InterPro" id="IPR039657">
    <property type="entry name" value="Dimethylallyltransferase"/>
</dbReference>
<dbReference type="InterPro" id="IPR018022">
    <property type="entry name" value="IPT"/>
</dbReference>
<dbReference type="InterPro" id="IPR027417">
    <property type="entry name" value="P-loop_NTPase"/>
</dbReference>
<dbReference type="NCBIfam" id="TIGR00174">
    <property type="entry name" value="miaA"/>
    <property type="match status" value="1"/>
</dbReference>
<dbReference type="PANTHER" id="PTHR11088">
    <property type="entry name" value="TRNA DIMETHYLALLYLTRANSFERASE"/>
    <property type="match status" value="1"/>
</dbReference>
<dbReference type="PANTHER" id="PTHR11088:SF60">
    <property type="entry name" value="TRNA DIMETHYLALLYLTRANSFERASE"/>
    <property type="match status" value="1"/>
</dbReference>
<dbReference type="Pfam" id="PF01715">
    <property type="entry name" value="IPPT"/>
    <property type="match status" value="1"/>
</dbReference>
<dbReference type="SUPFAM" id="SSF52540">
    <property type="entry name" value="P-loop containing nucleoside triphosphate hydrolases"/>
    <property type="match status" value="1"/>
</dbReference>
<comment type="function">
    <text evidence="1">Catalyzes the transfer of a dimethylallyl group onto the adenine at position 37 in tRNAs that read codons beginning with uridine, leading to the formation of N6-(dimethylallyl)adenosine (i(6)A).</text>
</comment>
<comment type="catalytic activity">
    <reaction evidence="1">
        <text>adenosine(37) in tRNA + dimethylallyl diphosphate = N(6)-dimethylallyladenosine(37) in tRNA + diphosphate</text>
        <dbReference type="Rhea" id="RHEA:26482"/>
        <dbReference type="Rhea" id="RHEA-COMP:10162"/>
        <dbReference type="Rhea" id="RHEA-COMP:10375"/>
        <dbReference type="ChEBI" id="CHEBI:33019"/>
        <dbReference type="ChEBI" id="CHEBI:57623"/>
        <dbReference type="ChEBI" id="CHEBI:74411"/>
        <dbReference type="ChEBI" id="CHEBI:74415"/>
        <dbReference type="EC" id="2.5.1.75"/>
    </reaction>
</comment>
<comment type="cofactor">
    <cofactor evidence="1">
        <name>Mg(2+)</name>
        <dbReference type="ChEBI" id="CHEBI:18420"/>
    </cofactor>
</comment>
<comment type="subunit">
    <text evidence="1">Monomer.</text>
</comment>
<comment type="similarity">
    <text evidence="1">Belongs to the IPP transferase family.</text>
</comment>
<evidence type="ECO:0000255" key="1">
    <source>
        <dbReference type="HAMAP-Rule" id="MF_00185"/>
    </source>
</evidence>
<accession>Q2SJX0</accession>
<reference key="1">
    <citation type="journal article" date="2005" name="Nucleic Acids Res.">
        <title>Genomic blueprint of Hahella chejuensis, a marine microbe producing an algicidal agent.</title>
        <authorList>
            <person name="Jeong H."/>
            <person name="Yim J.H."/>
            <person name="Lee C."/>
            <person name="Choi S.-H."/>
            <person name="Park Y.K."/>
            <person name="Yoon S.H."/>
            <person name="Hur C.-G."/>
            <person name="Kang H.-Y."/>
            <person name="Kim D."/>
            <person name="Lee H.H."/>
            <person name="Park K.H."/>
            <person name="Park S.-H."/>
            <person name="Park H.-S."/>
            <person name="Lee H.K."/>
            <person name="Oh T.K."/>
            <person name="Kim J.F."/>
        </authorList>
    </citation>
    <scope>NUCLEOTIDE SEQUENCE [LARGE SCALE GENOMIC DNA]</scope>
    <source>
        <strain>KCTC 2396</strain>
    </source>
</reference>
<sequence>MSIANDNPNARPVVVLGPTACGKTRLAVALARAFAGEVVSADSRQVFRGMDIGTGKDLQDYGDTPYHLIDIVDPGAPFSLFDYLGAMQRTLDDLDAREKRPIIAGGSGLYLDAILRGYRLVEAPVDPLLRERLKHHDQERLNALLASLRPLHNTTDTQDRERTLRAIEIAYAELNEDSPSVQISIDPVVIGLHCDNDRLRARIRERLETRLDEGLIEEVESLRAEGLSWRQLDELGLEYRYVALYLQEQLNRNDMMQKLASAIYLFARQQVKWFRRMERQGVAIHWLEADDAPLDNALALLRR</sequence>
<protein>
    <recommendedName>
        <fullName evidence="1">tRNA dimethylallyltransferase 1</fullName>
        <ecNumber evidence="1">2.5.1.75</ecNumber>
    </recommendedName>
    <alternativeName>
        <fullName evidence="1">Dimethylallyl diphosphate:tRNA dimethylallyltransferase 1</fullName>
        <shortName evidence="1">DMAPP:tRNA dimethylallyltransferase 1</shortName>
        <shortName evidence="1">DMATase 1</shortName>
    </alternativeName>
    <alternativeName>
        <fullName evidence="1">Isopentenyl-diphosphate:tRNA isopentenyltransferase 1</fullName>
        <shortName evidence="1">IPP transferase 1</shortName>
        <shortName evidence="1">IPPT 1</shortName>
        <shortName evidence="1">IPTase 1</shortName>
    </alternativeName>
</protein>